<evidence type="ECO:0000250" key="1">
    <source>
        <dbReference type="UniProtKB" id="Q8TCB7"/>
    </source>
</evidence>
<evidence type="ECO:0000256" key="2">
    <source>
        <dbReference type="SAM" id="MobiDB-lite"/>
    </source>
</evidence>
<evidence type="ECO:0000269" key="3">
    <source>
    </source>
</evidence>
<evidence type="ECO:0000269" key="4">
    <source>
    </source>
</evidence>
<evidence type="ECO:0000269" key="5">
    <source>
    </source>
</evidence>
<evidence type="ECO:0000269" key="6">
    <source>
    </source>
</evidence>
<evidence type="ECO:0000305" key="7"/>
<evidence type="ECO:0000305" key="8">
    <source>
    </source>
</evidence>
<evidence type="ECO:0000305" key="9">
    <source>
    </source>
</evidence>
<evidence type="ECO:0007744" key="10">
    <source>
    </source>
</evidence>
<evidence type="ECO:0007744" key="11">
    <source>
    </source>
</evidence>
<evidence type="ECO:0007744" key="12">
    <source>
    </source>
</evidence>
<evidence type="ECO:0007829" key="13">
    <source>
        <dbReference type="PDB" id="7AD9"/>
    </source>
</evidence>
<name>AB140_YEAST</name>
<proteinExistence type="evidence at protein level"/>
<organism>
    <name type="scientific">Saccharomyces cerevisiae (strain ATCC 204508 / S288c)</name>
    <name type="common">Baker's yeast</name>
    <dbReference type="NCBI Taxonomy" id="559292"/>
    <lineage>
        <taxon>Eukaryota</taxon>
        <taxon>Fungi</taxon>
        <taxon>Dikarya</taxon>
        <taxon>Ascomycota</taxon>
        <taxon>Saccharomycotina</taxon>
        <taxon>Saccharomycetes</taxon>
        <taxon>Saccharomycetales</taxon>
        <taxon>Saccharomycetaceae</taxon>
        <taxon>Saccharomyces</taxon>
    </lineage>
</organism>
<sequence length="628" mass="71486">MGVADLIKKFESISKEEGDATVDTNSSSKPLKSNDETKELHQQESTAVPQEVDVNEEFENEPETINSSRTAEKPLETNLPKPETNEEDEEEGSMSENKIYSKGENADINVNDFQEYKEMENTGAEVLASSVEESDAIQEGVAEETEGIATPKQKENEKNDESEEESANNASEPAEEYSQSEEDADIEQSNGKETENAENASQQANDGSTSTTTSKNKKKKNKKKNKKKRNGNVNTNANVDDSTKTGENDDTTGDTTSSTTSAIQEVNDLEVVDDSCLGIDQQHNREHLKALTQDVKEETLENIAHEGRGDNTGDQNAVEKSDFEKSDTEGSRIGRDLPFEFGKRNLTEESDVWDHNAWDNVEWGEEQVQQAEEKIKEQFKHPVPEFDKKLYNENPARYWDIFYKNNKENFFKDRKWLQIEFPILYASTRKDAEPVTIFEIGCGAGNTFFPILKDNENENLRIIAADFAPRAVELVKNSEQFNPKYGHATVWDLANPDGNLPDGVEPHSVDIAVMIFVFSALAPNQWDQAMDNLHKILKPGGKIIFRDYGAYDLTQVRFKKNRILEENFYVRGDGTRVYFFSEEKLREIFTKKYFLENKIGTDRRLLVNRKRQLKMYRCWVQAVFDVPQ</sequence>
<reference key="1">
    <citation type="journal article" date="1996" name="Yeast">
        <title>Sequence and analysis of a 26.9 kb fragment from chromosome XV of the yeast Saccharomyces cerevisiae.</title>
        <authorList>
            <person name="Boyer J."/>
            <person name="Michaux G."/>
            <person name="Fairhead C."/>
            <person name="Gaillon L."/>
            <person name="Dujon B."/>
        </authorList>
    </citation>
    <scope>NUCLEOTIDE SEQUENCE [GENOMIC DNA]</scope>
    <source>
        <strain>ATCC 96604 / S288c / FY1679</strain>
    </source>
</reference>
<reference key="2">
    <citation type="journal article" date="1997" name="Nature">
        <title>The nucleotide sequence of Saccharomyces cerevisiae chromosome XV.</title>
        <authorList>
            <person name="Dujon B."/>
            <person name="Albermann K."/>
            <person name="Aldea M."/>
            <person name="Alexandraki D."/>
            <person name="Ansorge W."/>
            <person name="Arino J."/>
            <person name="Benes V."/>
            <person name="Bohn C."/>
            <person name="Bolotin-Fukuhara M."/>
            <person name="Bordonne R."/>
            <person name="Boyer J."/>
            <person name="Camasses A."/>
            <person name="Casamayor A."/>
            <person name="Casas C."/>
            <person name="Cheret G."/>
            <person name="Cziepluch C."/>
            <person name="Daignan-Fornier B."/>
            <person name="Dang V.-D."/>
            <person name="de Haan M."/>
            <person name="Delius H."/>
            <person name="Durand P."/>
            <person name="Fairhead C."/>
            <person name="Feldmann H."/>
            <person name="Gaillon L."/>
            <person name="Galisson F."/>
            <person name="Gamo F.-J."/>
            <person name="Gancedo C."/>
            <person name="Goffeau A."/>
            <person name="Goulding S.E."/>
            <person name="Grivell L.A."/>
            <person name="Habbig B."/>
            <person name="Hand N.J."/>
            <person name="Hani J."/>
            <person name="Hattenhorst U."/>
            <person name="Hebling U."/>
            <person name="Hernando Y."/>
            <person name="Herrero E."/>
            <person name="Heumann K."/>
            <person name="Hiesel R."/>
            <person name="Hilger F."/>
            <person name="Hofmann B."/>
            <person name="Hollenberg C.P."/>
            <person name="Hughes B."/>
            <person name="Jauniaux J.-C."/>
            <person name="Kalogeropoulos A."/>
            <person name="Katsoulou C."/>
            <person name="Kordes E."/>
            <person name="Lafuente M.J."/>
            <person name="Landt O."/>
            <person name="Louis E.J."/>
            <person name="Maarse A.C."/>
            <person name="Madania A."/>
            <person name="Mannhaupt G."/>
            <person name="Marck C."/>
            <person name="Martin R.P."/>
            <person name="Mewes H.-W."/>
            <person name="Michaux G."/>
            <person name="Paces V."/>
            <person name="Parle-McDermott A.G."/>
            <person name="Pearson B.M."/>
            <person name="Perrin A."/>
            <person name="Pettersson B."/>
            <person name="Poch O."/>
            <person name="Pohl T.M."/>
            <person name="Poirey R."/>
            <person name="Portetelle D."/>
            <person name="Pujol A."/>
            <person name="Purnelle B."/>
            <person name="Ramezani Rad M."/>
            <person name="Rechmann S."/>
            <person name="Schwager C."/>
            <person name="Schweizer M."/>
            <person name="Sor F."/>
            <person name="Sterky F."/>
            <person name="Tarassov I.A."/>
            <person name="Teodoru C."/>
            <person name="Tettelin H."/>
            <person name="Thierry A."/>
            <person name="Tobiasch E."/>
            <person name="Tzermia M."/>
            <person name="Uhlen M."/>
            <person name="Unseld M."/>
            <person name="Valens M."/>
            <person name="Vandenbol M."/>
            <person name="Vetter I."/>
            <person name="Vlcek C."/>
            <person name="Voet M."/>
            <person name="Volckaert G."/>
            <person name="Voss H."/>
            <person name="Wambutt R."/>
            <person name="Wedler H."/>
            <person name="Wiemann S."/>
            <person name="Winsor B."/>
            <person name="Wolfe K.H."/>
            <person name="Zollner A."/>
            <person name="Zumstein E."/>
            <person name="Kleine K."/>
        </authorList>
    </citation>
    <scope>NUCLEOTIDE SEQUENCE [LARGE SCALE GENOMIC DNA]</scope>
    <source>
        <strain>ATCC 204508 / S288c</strain>
    </source>
</reference>
<reference key="3">
    <citation type="journal article" date="2014" name="G3 (Bethesda)">
        <title>The reference genome sequence of Saccharomyces cerevisiae: Then and now.</title>
        <authorList>
            <person name="Engel S.R."/>
            <person name="Dietrich F.S."/>
            <person name="Fisk D.G."/>
            <person name="Binkley G."/>
            <person name="Balakrishnan R."/>
            <person name="Costanzo M.C."/>
            <person name="Dwight S.S."/>
            <person name="Hitz B.C."/>
            <person name="Karra K."/>
            <person name="Nash R.S."/>
            <person name="Weng S."/>
            <person name="Wong E.D."/>
            <person name="Lloyd P."/>
            <person name="Skrzypek M.S."/>
            <person name="Miyasato S.R."/>
            <person name="Simison M."/>
            <person name="Cherry J.M."/>
        </authorList>
    </citation>
    <scope>GENOME REANNOTATION</scope>
    <source>
        <strain>ATCC 204508 / S288c</strain>
    </source>
</reference>
<reference key="4">
    <citation type="journal article" date="1998" name="Oncogene">
        <title>Isolation and characterization of a novel actin filament-binding protein from Saccharomyces cerevisiae.</title>
        <authorList>
            <person name="Asakura T."/>
            <person name="Sasaki T."/>
            <person name="Nagano F."/>
            <person name="Satoh A."/>
            <person name="Obaishi H."/>
            <person name="Nishioka H."/>
            <person name="Imamura H."/>
            <person name="Hotta K."/>
            <person name="Tanaka K."/>
            <person name="Nakanishi H."/>
            <person name="Takai Y."/>
        </authorList>
    </citation>
    <scope>PARTIAL NUCLEOTIDE SEQUENCE</scope>
    <scope>PROTEIN SEQUENCE OF 2-13; 39-73; 103-116; 245-287; 561-575 AND 599-609</scope>
    <scope>FUNCTION</scope>
    <scope>SUBCELLULAR LOCATION</scope>
    <source>
        <strain>BJ5457</strain>
    </source>
</reference>
<reference key="5">
    <citation type="journal article" date="2007" name="J. Proteome Res.">
        <title>Large-scale phosphorylation analysis of alpha-factor-arrested Saccharomyces cerevisiae.</title>
        <authorList>
            <person name="Li X."/>
            <person name="Gerber S.A."/>
            <person name="Rudner A.D."/>
            <person name="Beausoleil S.A."/>
            <person name="Haas W."/>
            <person name="Villen J."/>
            <person name="Elias J.E."/>
            <person name="Gygi S.P."/>
        </authorList>
    </citation>
    <scope>PHOSPHORYLATION [LARGE SCALE ANALYSIS] AT SER-93; SER-321 AND SER-326</scope>
    <scope>IDENTIFICATION BY MASS SPECTROMETRY [LARGE SCALE ANALYSIS]</scope>
    <source>
        <strain>ADR376</strain>
    </source>
</reference>
<reference key="6">
    <citation type="journal article" date="2007" name="Proc. Natl. Acad. Sci. U.S.A.">
        <title>Analysis of phosphorylation sites on proteins from Saccharomyces cerevisiae by electron transfer dissociation (ETD) mass spectrometry.</title>
        <authorList>
            <person name="Chi A."/>
            <person name="Huttenhower C."/>
            <person name="Geer L.Y."/>
            <person name="Coon J.J."/>
            <person name="Syka J.E.P."/>
            <person name="Bai D.L."/>
            <person name="Shabanowitz J."/>
            <person name="Burke D.J."/>
            <person name="Troyanskaya O.G."/>
            <person name="Hunt D.F."/>
        </authorList>
    </citation>
    <scope>IDENTIFICATION BY MASS SPECTROMETRY [LARGE SCALE ANALYSIS]</scope>
</reference>
<reference key="7">
    <citation type="journal article" date="2008" name="Mol. Cell. Proteomics">
        <title>A multidimensional chromatography technology for in-depth phosphoproteome analysis.</title>
        <authorList>
            <person name="Albuquerque C.P."/>
            <person name="Smolka M.B."/>
            <person name="Payne S.H."/>
            <person name="Bafna V."/>
            <person name="Eng J."/>
            <person name="Zhou H."/>
        </authorList>
    </citation>
    <scope>PHOSPHORYLATION [LARGE SCALE ANALYSIS] AT THR-150 AND SER-326</scope>
    <scope>IDENTIFICATION BY MASS SPECTROMETRY [LARGE SCALE ANALYSIS]</scope>
</reference>
<reference key="8">
    <citation type="journal article" date="2009" name="Science">
        <title>Global analysis of Cdk1 substrate phosphorylation sites provides insights into evolution.</title>
        <authorList>
            <person name="Holt L.J."/>
            <person name="Tuch B.B."/>
            <person name="Villen J."/>
            <person name="Johnson A.D."/>
            <person name="Gygi S.P."/>
            <person name="Morgan D.O."/>
        </authorList>
    </citation>
    <scope>PHOSPHORYLATION [LARGE SCALE ANALYSIS] AT SER-93; SER-321; SER-326 AND THR-347</scope>
    <scope>IDENTIFICATION BY MASS SPECTROMETRY [LARGE SCALE ANALYSIS]</scope>
</reference>
<reference key="9">
    <citation type="journal article" date="2011" name="EMBO J.">
        <title>Cotranslational transport of ABP140 mRNA to the distal pole of S. cerevisiae.</title>
        <authorList>
            <person name="Kilchert C."/>
            <person name="Spang A."/>
        </authorList>
    </citation>
    <scope>MRNA TRANSLATION</scope>
</reference>
<reference key="10">
    <citation type="journal article" date="2011" name="RNA">
        <title>A domain of the actin binding protein Abp140 is the yeast methyltransferase responsible for 3-methylcytidine modification in the tRNA anti-codon loop.</title>
        <authorList>
            <person name="D'Silva S."/>
            <person name="Haider S.J."/>
            <person name="Phizicky E.M."/>
        </authorList>
    </citation>
    <scope>FUNCTION</scope>
    <scope>CATALYTIC ACTIVITY</scope>
</reference>
<reference key="11">
    <citation type="journal article" date="2011" name="RNA">
        <title>Actin-binding protein ABP140 is a methyltransferase for 3-methylcytidine at position 32 of tRNAs in Saccharomyces cerevisiae.</title>
        <authorList>
            <person name="Noma A."/>
            <person name="Yi S."/>
            <person name="Katoh T."/>
            <person name="Takai Y."/>
            <person name="Suzuki T."/>
            <person name="Suzuki T."/>
        </authorList>
    </citation>
    <scope>FUNCTION</scope>
    <scope>CATALYTIC ACTIVITY</scope>
</reference>
<reference key="12">
    <citation type="journal article" date="2017" name="RNA">
        <title>S. cerevisiae Trm140 has two recognition modes for 3-methylcytidine modification of the anticodon loop of tRNA substrates.</title>
        <authorList>
            <person name="Han L."/>
            <person name="Marcus E."/>
            <person name="D'Silva S."/>
            <person name="Phizicky E.M."/>
        </authorList>
    </citation>
    <scope>FUNCTION</scope>
    <scope>CATALYTIC ACTIVITY</scope>
    <scope>INTERACTION WITH SES1</scope>
</reference>
<protein>
    <recommendedName>
        <fullName>tRNA(Thr) (cytosine(32)-N(3))-methyltransferase</fullName>
        <ecNumber evidence="3 4">2.1.1.268</ecNumber>
    </recommendedName>
    <alternativeName>
        <fullName>Actin-binding protein of 140 kDa</fullName>
    </alternativeName>
    <alternativeName>
        <fullName>tRNA methyltransferase of 140 kDa</fullName>
    </alternativeName>
</protein>
<feature type="initiator methionine" description="Removed" evidence="6">
    <location>
        <position position="1"/>
    </location>
</feature>
<feature type="chain" id="PRO_0000204458" description="tRNA(Thr) (cytosine(32)-N(3))-methyltransferase">
    <location>
        <begin position="2"/>
        <end position="628"/>
    </location>
</feature>
<feature type="region of interest" description="Disordered" evidence="2">
    <location>
        <begin position="1"/>
        <end position="106"/>
    </location>
</feature>
<feature type="region of interest" description="Disordered" evidence="2">
    <location>
        <begin position="124"/>
        <end position="269"/>
    </location>
</feature>
<feature type="region of interest" description="Disordered" evidence="2">
    <location>
        <begin position="302"/>
        <end position="331"/>
    </location>
</feature>
<feature type="compositionally biased region" description="Basic and acidic residues" evidence="2">
    <location>
        <begin position="1"/>
        <end position="18"/>
    </location>
</feature>
<feature type="compositionally biased region" description="Polar residues" evidence="2">
    <location>
        <begin position="22"/>
        <end position="31"/>
    </location>
</feature>
<feature type="compositionally biased region" description="Basic and acidic residues" evidence="2">
    <location>
        <begin position="32"/>
        <end position="42"/>
    </location>
</feature>
<feature type="compositionally biased region" description="Acidic residues" evidence="2">
    <location>
        <begin position="53"/>
        <end position="62"/>
    </location>
</feature>
<feature type="compositionally biased region" description="Acidic residues" evidence="2">
    <location>
        <begin position="132"/>
        <end position="146"/>
    </location>
</feature>
<feature type="compositionally biased region" description="Acidic residues" evidence="2">
    <location>
        <begin position="173"/>
        <end position="186"/>
    </location>
</feature>
<feature type="compositionally biased region" description="Polar residues" evidence="2">
    <location>
        <begin position="196"/>
        <end position="207"/>
    </location>
</feature>
<feature type="compositionally biased region" description="Basic residues" evidence="2">
    <location>
        <begin position="215"/>
        <end position="230"/>
    </location>
</feature>
<feature type="compositionally biased region" description="Polar residues" evidence="2">
    <location>
        <begin position="231"/>
        <end position="240"/>
    </location>
</feature>
<feature type="binding site" evidence="1">
    <location>
        <position position="399"/>
    </location>
    <ligand>
        <name>S-adenosyl-L-methionine</name>
        <dbReference type="ChEBI" id="CHEBI:59789"/>
    </ligand>
</feature>
<feature type="binding site" evidence="1">
    <location>
        <position position="403"/>
    </location>
    <ligand>
        <name>S-adenosyl-L-methionine</name>
        <dbReference type="ChEBI" id="CHEBI:59789"/>
    </ligand>
</feature>
<feature type="binding site" evidence="1">
    <location>
        <position position="441"/>
    </location>
    <ligand>
        <name>S-adenosyl-L-methionine</name>
        <dbReference type="ChEBI" id="CHEBI:59789"/>
    </ligand>
</feature>
<feature type="binding site" evidence="1">
    <location>
        <position position="466"/>
    </location>
    <ligand>
        <name>S-adenosyl-L-methionine</name>
        <dbReference type="ChEBI" id="CHEBI:59789"/>
    </ligand>
</feature>
<feature type="binding site" evidence="1">
    <location>
        <position position="492"/>
    </location>
    <ligand>
        <name>S-adenosyl-L-methionine</name>
        <dbReference type="ChEBI" id="CHEBI:59789"/>
    </ligand>
</feature>
<feature type="binding site" evidence="1">
    <location>
        <position position="493"/>
    </location>
    <ligand>
        <name>S-adenosyl-L-methionine</name>
        <dbReference type="ChEBI" id="CHEBI:59789"/>
    </ligand>
</feature>
<feature type="binding site" evidence="1">
    <location>
        <position position="515"/>
    </location>
    <ligand>
        <name>S-adenosyl-L-methionine</name>
        <dbReference type="ChEBI" id="CHEBI:59789"/>
    </ligand>
</feature>
<feature type="modified residue" description="Phosphoserine" evidence="10 12">
    <location>
        <position position="93"/>
    </location>
</feature>
<feature type="modified residue" description="Phosphothreonine" evidence="11">
    <location>
        <position position="150"/>
    </location>
</feature>
<feature type="modified residue" description="Phosphoserine" evidence="10 12">
    <location>
        <position position="321"/>
    </location>
</feature>
<feature type="modified residue" description="Phosphoserine" evidence="10 11 12">
    <location>
        <position position="326"/>
    </location>
</feature>
<feature type="modified residue" description="Phosphothreonine" evidence="12">
    <location>
        <position position="347"/>
    </location>
</feature>
<feature type="helix" evidence="13">
    <location>
        <begin position="3"/>
        <end position="15"/>
    </location>
</feature>
<keyword id="KW-0002">3D-structure</keyword>
<keyword id="KW-0009">Actin-binding</keyword>
<keyword id="KW-0963">Cytoplasm</keyword>
<keyword id="KW-0206">Cytoskeleton</keyword>
<keyword id="KW-0903">Direct protein sequencing</keyword>
<keyword id="KW-0489">Methyltransferase</keyword>
<keyword id="KW-0597">Phosphoprotein</keyword>
<keyword id="KW-1185">Reference proteome</keyword>
<keyword id="KW-0688">Ribosomal frameshifting</keyword>
<keyword id="KW-0949">S-adenosyl-L-methionine</keyword>
<keyword id="KW-0808">Transferase</keyword>
<keyword id="KW-0819">tRNA processing</keyword>
<accession>Q08641</accession>
<accession>D6W2U2</accession>
<accession>Q08644</accession>
<gene>
    <name type="primary">ABP140</name>
    <name type="synonym">TRM140</name>
    <name type="ordered locus">YOR239W</name>
    <name type="ORF">YOR240W</name>
</gene>
<dbReference type="EC" id="2.1.1.268" evidence="3 4"/>
<dbReference type="EMBL" id="Z75147">
    <property type="protein sequence ID" value="CAA99460.1"/>
    <property type="status" value="ALT_SEQ"/>
    <property type="molecule type" value="Genomic_DNA"/>
</dbReference>
<dbReference type="EMBL" id="Z75147">
    <property type="protein sequence ID" value="CAA99461.1"/>
    <property type="status" value="ALT_SEQ"/>
    <property type="molecule type" value="Genomic_DNA"/>
</dbReference>
<dbReference type="EMBL" id="BK006948">
    <property type="protein sequence ID" value="DAA11008.1"/>
    <property type="molecule type" value="Genomic_DNA"/>
</dbReference>
<dbReference type="RefSeq" id="NP_014882.4">
    <molecule id="Q08641-1"/>
    <property type="nucleotide sequence ID" value="NM_001183658.6"/>
</dbReference>
<dbReference type="PDB" id="7AD9">
    <property type="method" value="EM"/>
    <property type="resolution" value="3.50 A"/>
    <property type="chains" value="A/C/E/G/L=1-17"/>
</dbReference>
<dbReference type="PDB" id="7BTE">
    <property type="method" value="EM"/>
    <property type="resolution" value="4.20 A"/>
    <property type="chains" value="L/M/N=1-17"/>
</dbReference>
<dbReference type="PDB" id="8PVX">
    <property type="method" value="EM"/>
    <property type="resolution" value="3.55 A"/>
    <property type="chains" value="F/G/H/I/J=1-13"/>
</dbReference>
<dbReference type="PDBsum" id="7AD9"/>
<dbReference type="PDBsum" id="7BTE"/>
<dbReference type="PDBsum" id="8PVX"/>
<dbReference type="SMR" id="Q08641"/>
<dbReference type="BioGRID" id="34631">
    <property type="interactions" value="58"/>
</dbReference>
<dbReference type="DIP" id="DIP-4117N"/>
<dbReference type="FunCoup" id="Q08641">
    <property type="interactions" value="92"/>
</dbReference>
<dbReference type="IntAct" id="Q08641">
    <property type="interactions" value="37"/>
</dbReference>
<dbReference type="STRING" id="4932.YOR239W"/>
<dbReference type="iPTMnet" id="Q08641"/>
<dbReference type="PaxDb" id="4932-YOR239W"/>
<dbReference type="PeptideAtlas" id="Q08641"/>
<dbReference type="EnsemblFungi" id="YOR239W_mRNA">
    <molecule id="Q08641-1"/>
    <property type="protein sequence ID" value="YOR239W"/>
    <property type="gene ID" value="YOR239W"/>
</dbReference>
<dbReference type="GeneID" id="854414"/>
<dbReference type="KEGG" id="sce:YOR239W"/>
<dbReference type="AGR" id="SGD:S000005765"/>
<dbReference type="SGD" id="S000005765">
    <property type="gene designation" value="ABP140"/>
</dbReference>
<dbReference type="VEuPathDB" id="FungiDB:YOR239W"/>
<dbReference type="eggNOG" id="KOG2361">
    <property type="taxonomic scope" value="Eukaryota"/>
</dbReference>
<dbReference type="GeneTree" id="ENSGT00940000171213"/>
<dbReference type="HOGENOM" id="CLU_029724_1_2_1"/>
<dbReference type="InParanoid" id="Q08641"/>
<dbReference type="OMA" id="HEANNIV"/>
<dbReference type="OrthoDB" id="417697at2759"/>
<dbReference type="BioCyc" id="YEAST:G3O-33735-MONOMER"/>
<dbReference type="BRENDA" id="2.1.1.268">
    <property type="organism ID" value="984"/>
</dbReference>
<dbReference type="BioGRID-ORCS" id="854414">
    <property type="hits" value="3 hits in 10 CRISPR screens"/>
</dbReference>
<dbReference type="PRO" id="PR:Q08641"/>
<dbReference type="Proteomes" id="UP000002311">
    <property type="component" value="Chromosome XV"/>
</dbReference>
<dbReference type="RNAct" id="Q08641">
    <property type="molecule type" value="protein"/>
</dbReference>
<dbReference type="GO" id="GO:0005884">
    <property type="term" value="C:actin filament"/>
    <property type="evidence" value="ECO:0000314"/>
    <property type="project" value="SGD"/>
</dbReference>
<dbReference type="GO" id="GO:0032432">
    <property type="term" value="C:actin filament bundle"/>
    <property type="evidence" value="ECO:0000314"/>
    <property type="project" value="SGD"/>
</dbReference>
<dbReference type="GO" id="GO:0005737">
    <property type="term" value="C:cytoplasm"/>
    <property type="evidence" value="ECO:0007669"/>
    <property type="project" value="UniProtKB-SubCell"/>
</dbReference>
<dbReference type="GO" id="GO:0043332">
    <property type="term" value="C:mating projection tip"/>
    <property type="evidence" value="ECO:0007005"/>
    <property type="project" value="SGD"/>
</dbReference>
<dbReference type="GO" id="GO:0051015">
    <property type="term" value="F:actin filament binding"/>
    <property type="evidence" value="ECO:0000314"/>
    <property type="project" value="SGD"/>
</dbReference>
<dbReference type="GO" id="GO:0030674">
    <property type="term" value="F:protein-macromolecule adaptor activity"/>
    <property type="evidence" value="ECO:0000314"/>
    <property type="project" value="SGD"/>
</dbReference>
<dbReference type="GO" id="GO:0052735">
    <property type="term" value="F:tRNA (cytidine-3-)-methyltransferase activity"/>
    <property type="evidence" value="ECO:0000314"/>
    <property type="project" value="UniProtKB"/>
</dbReference>
<dbReference type="GO" id="GO:0030488">
    <property type="term" value="P:tRNA methylation"/>
    <property type="evidence" value="ECO:0000315"/>
    <property type="project" value="SGD"/>
</dbReference>
<dbReference type="GO" id="GO:0075523">
    <property type="term" value="P:viral translational frameshifting"/>
    <property type="evidence" value="ECO:0007669"/>
    <property type="project" value="UniProtKB-KW"/>
</dbReference>
<dbReference type="CDD" id="cd02440">
    <property type="entry name" value="AdoMet_MTases"/>
    <property type="match status" value="1"/>
</dbReference>
<dbReference type="FunFam" id="3.40.50.150:FF:000221">
    <property type="entry name" value="Methyltransferase-like protein"/>
    <property type="match status" value="1"/>
</dbReference>
<dbReference type="Gene3D" id="3.40.50.150">
    <property type="entry name" value="Vaccinia Virus protein VP39"/>
    <property type="match status" value="1"/>
</dbReference>
<dbReference type="InterPro" id="IPR013217">
    <property type="entry name" value="Methyltransf_12"/>
</dbReference>
<dbReference type="InterPro" id="IPR026113">
    <property type="entry name" value="METTL2/6/8-like"/>
</dbReference>
<dbReference type="InterPro" id="IPR029063">
    <property type="entry name" value="SAM-dependent_MTases_sf"/>
</dbReference>
<dbReference type="PANTHER" id="PTHR22809">
    <property type="entry name" value="METHYLTRANSFERASE-RELATED"/>
    <property type="match status" value="1"/>
</dbReference>
<dbReference type="PANTHER" id="PTHR22809:SF11">
    <property type="entry name" value="TRNA N(3)-METHYLCYTIDINE METHYLTRANSFERASE METTL2"/>
    <property type="match status" value="1"/>
</dbReference>
<dbReference type="Pfam" id="PF08242">
    <property type="entry name" value="Methyltransf_12"/>
    <property type="match status" value="1"/>
</dbReference>
<dbReference type="SUPFAM" id="SSF53335">
    <property type="entry name" value="S-adenosyl-L-methionine-dependent methyltransferases"/>
    <property type="match status" value="1"/>
</dbReference>
<comment type="function">
    <text evidence="3 4 5 6">S-adenosyl-L-methionine-dependent methyltransferase that mediates N(3)-methylcytidine modification of residue 32 of the tRNA anticodon loop of tRNA(Thr) and tRNA(Ser) (PubMed:21518804, PubMed:21518805, PubMed:28003514). N(3)-methylcytidine methylation of tRNA(Thr) requires the N6-threonylcarbamoylation of tRNA (t6A37) by the EKC/KEOPS complex as prerequisite (PubMed:28003514). N(3)-methylcytidine methylation of tRNA(Ser) requires the formation of N(6)-dimethylallyladenosine(37) (i6A37) by MOD5 as prerequisite (PubMed:28003514). Methylation of tRNA(Ser) is also stimulated by SES1 (PubMed:28003514). Binds F-actin and shows weak F-actin cross-linking activity (PubMed:9467951).</text>
</comment>
<comment type="catalytic activity">
    <reaction evidence="3 4 5">
        <text>cytidine(32) in tRNA(Thr) + S-adenosyl-L-methionine = N(3)-methylcytidine(32) in tRNA(Thr) + S-adenosyl-L-homocysteine + H(+)</text>
        <dbReference type="Rhea" id="RHEA:50960"/>
        <dbReference type="Rhea" id="RHEA-COMP:12850"/>
        <dbReference type="Rhea" id="RHEA-COMP:12852"/>
        <dbReference type="ChEBI" id="CHEBI:15378"/>
        <dbReference type="ChEBI" id="CHEBI:57856"/>
        <dbReference type="ChEBI" id="CHEBI:59789"/>
        <dbReference type="ChEBI" id="CHEBI:74894"/>
        <dbReference type="ChEBI" id="CHEBI:82748"/>
        <dbReference type="EC" id="2.1.1.268"/>
    </reaction>
</comment>
<comment type="catalytic activity">
    <reaction evidence="3 4 5">
        <text>cytidine(32) in tRNA(Ser) + S-adenosyl-L-methionine = N(3)-methylcytidine(32) in tRNA(Ser) + S-adenosyl-L-homocysteine + H(+)</text>
        <dbReference type="Rhea" id="RHEA:50956"/>
        <dbReference type="Rhea" id="RHEA-COMP:12849"/>
        <dbReference type="Rhea" id="RHEA-COMP:12851"/>
        <dbReference type="ChEBI" id="CHEBI:15378"/>
        <dbReference type="ChEBI" id="CHEBI:57856"/>
        <dbReference type="ChEBI" id="CHEBI:59789"/>
        <dbReference type="ChEBI" id="CHEBI:74894"/>
        <dbReference type="ChEBI" id="CHEBI:82748"/>
        <dbReference type="EC" id="2.1.1.268"/>
    </reaction>
</comment>
<comment type="subunit">
    <text evidence="5">Interacts with SES1.</text>
</comment>
<comment type="subcellular location">
    <subcellularLocation>
        <location evidence="6">Cytoplasm</location>
    </subcellularLocation>
    <subcellularLocation>
        <location evidence="6">Cytoplasm</location>
        <location evidence="6">Cytoskeleton</location>
    </subcellularLocation>
    <text evidence="6">Cytoplasmic and cortical cytoskeleton.</text>
</comment>
<comment type="alternative products">
    <event type="ribosomal frameshifting"/>
    <isoform>
        <id>Q08641-1</id>
        <name>1</name>
        <sequence type="displayed"/>
    </isoform>
</comment>
<comment type="miscellaneous">
    <text evidence="8 9">N- and C-terminal domains are encoded in separate ORFs that are translated into one protein via a +1 frameshift (PubMed:9467951). ABP140 mRNA translation follows a cotranslational transport: mRNA is transported to the distal pole of the mother cell, independently of the SHE machinery, and follows a translational coupling, in which ABP140 mRNA is tethered to actin cables via its nascent protein product and is transported to the distal pole by actin retrograde flow (PubMed:21792172).</text>
</comment>
<comment type="miscellaneous">
    <molecule>Isoform 1</molecule>
    <text>Produced by ribosomal frameshifting between codon Leu-277 and Gly-278.</text>
</comment>
<comment type="similarity">
    <text evidence="7">Belongs to the methyltransferase superfamily. METL family.</text>
</comment>